<accession>Q3L6X2</accession>
<organism>
    <name type="scientific">Vulpes lagopus</name>
    <name type="common">Arctic fox</name>
    <name type="synonym">Alopex lagopus</name>
    <dbReference type="NCBI Taxonomy" id="494514"/>
    <lineage>
        <taxon>Eukaryota</taxon>
        <taxon>Metazoa</taxon>
        <taxon>Chordata</taxon>
        <taxon>Craniata</taxon>
        <taxon>Vertebrata</taxon>
        <taxon>Euteleostomi</taxon>
        <taxon>Mammalia</taxon>
        <taxon>Eutheria</taxon>
        <taxon>Laurasiatheria</taxon>
        <taxon>Carnivora</taxon>
        <taxon>Caniformia</taxon>
        <taxon>Canidae</taxon>
        <taxon>Vulpes</taxon>
    </lineage>
</organism>
<comment type="function">
    <text evidence="1">Core subunit of the mitochondrial membrane respiratory chain NADH dehydrogenase (Complex I) which catalyzes electron transfer from NADH through the respiratory chain, using ubiquinone as an electron acceptor. Part of the enzyme membrane arm which is embedded in the lipid bilayer and involved in proton translocation.</text>
</comment>
<comment type="catalytic activity">
    <reaction evidence="1">
        <text>a ubiquinone + NADH + 5 H(+)(in) = a ubiquinol + NAD(+) + 4 H(+)(out)</text>
        <dbReference type="Rhea" id="RHEA:29091"/>
        <dbReference type="Rhea" id="RHEA-COMP:9565"/>
        <dbReference type="Rhea" id="RHEA-COMP:9566"/>
        <dbReference type="ChEBI" id="CHEBI:15378"/>
        <dbReference type="ChEBI" id="CHEBI:16389"/>
        <dbReference type="ChEBI" id="CHEBI:17976"/>
        <dbReference type="ChEBI" id="CHEBI:57540"/>
        <dbReference type="ChEBI" id="CHEBI:57945"/>
        <dbReference type="EC" id="7.1.1.2"/>
    </reaction>
    <physiologicalReaction direction="left-to-right" evidence="1">
        <dbReference type="Rhea" id="RHEA:29092"/>
    </physiologicalReaction>
</comment>
<comment type="subunit">
    <text evidence="2">Core subunit of respiratory chain NADH dehydrogenase (Complex I) which is composed of 45 different subunits.</text>
</comment>
<comment type="subcellular location">
    <subcellularLocation>
        <location evidence="2">Mitochondrion inner membrane</location>
        <topology evidence="3">Multi-pass membrane protein</topology>
    </subcellularLocation>
</comment>
<comment type="similarity">
    <text evidence="4">Belongs to the complex I subunit 4L family.</text>
</comment>
<keyword id="KW-0249">Electron transport</keyword>
<keyword id="KW-0472">Membrane</keyword>
<keyword id="KW-0496">Mitochondrion</keyword>
<keyword id="KW-0999">Mitochondrion inner membrane</keyword>
<keyword id="KW-0520">NAD</keyword>
<keyword id="KW-0679">Respiratory chain</keyword>
<keyword id="KW-1278">Translocase</keyword>
<keyword id="KW-0812">Transmembrane</keyword>
<keyword id="KW-1133">Transmembrane helix</keyword>
<keyword id="KW-0813">Transport</keyword>
<keyword id="KW-0830">Ubiquinone</keyword>
<reference key="1">
    <citation type="journal article" date="2005" name="Mol. Phylogenet. Evol.">
        <title>A phylogeny of the Caniformia (order Carnivora) based on 12 complete protein-coding mitochondrial genes.</title>
        <authorList>
            <person name="Delisle I."/>
            <person name="Strobeck C."/>
        </authorList>
    </citation>
    <scope>NUCLEOTIDE SEQUENCE [GENOMIC DNA]</scope>
</reference>
<sequence>MSMVYINIFLAFILSLMGMLVYRSHLMSSLLCLEGMMLSLFVMMSVTILNNHLTLASMMPIVLLVFAACEAALGLSLLVMVSNTYGTDYVQNLNLLQC</sequence>
<protein>
    <recommendedName>
        <fullName>NADH-ubiquinone oxidoreductase chain 4L</fullName>
        <ecNumber>7.1.1.2</ecNumber>
    </recommendedName>
    <alternativeName>
        <fullName>NADH dehydrogenase subunit 4L</fullName>
    </alternativeName>
</protein>
<dbReference type="EC" id="7.1.1.2"/>
<dbReference type="EMBL" id="AY598516">
    <property type="protein sequence ID" value="AAU00462.1"/>
    <property type="molecule type" value="Genomic_DNA"/>
</dbReference>
<dbReference type="RefSeq" id="YP_009122393.1">
    <property type="nucleotide sequence ID" value="NC_026529.1"/>
</dbReference>
<dbReference type="SMR" id="Q3L6X2"/>
<dbReference type="GeneID" id="23629754"/>
<dbReference type="KEGG" id="vlg:23629754"/>
<dbReference type="CTD" id="4539"/>
<dbReference type="OrthoDB" id="19063at33554"/>
<dbReference type="GO" id="GO:0005743">
    <property type="term" value="C:mitochondrial inner membrane"/>
    <property type="evidence" value="ECO:0000250"/>
    <property type="project" value="UniProtKB"/>
</dbReference>
<dbReference type="GO" id="GO:0045271">
    <property type="term" value="C:respiratory chain complex I"/>
    <property type="evidence" value="ECO:0000250"/>
    <property type="project" value="UniProtKB"/>
</dbReference>
<dbReference type="GO" id="GO:0008137">
    <property type="term" value="F:NADH dehydrogenase (ubiquinone) activity"/>
    <property type="evidence" value="ECO:0000250"/>
    <property type="project" value="UniProtKB"/>
</dbReference>
<dbReference type="GO" id="GO:0042773">
    <property type="term" value="P:ATP synthesis coupled electron transport"/>
    <property type="evidence" value="ECO:0007669"/>
    <property type="project" value="InterPro"/>
</dbReference>
<dbReference type="FunFam" id="1.10.287.3510:FF:000002">
    <property type="entry name" value="NADH-ubiquinone oxidoreductase chain 4L"/>
    <property type="match status" value="1"/>
</dbReference>
<dbReference type="Gene3D" id="1.10.287.3510">
    <property type="match status" value="1"/>
</dbReference>
<dbReference type="InterPro" id="IPR001133">
    <property type="entry name" value="NADH_UbQ_OxRdtase_chain4L/K"/>
</dbReference>
<dbReference type="InterPro" id="IPR039428">
    <property type="entry name" value="NUOK/Mnh_C1-like"/>
</dbReference>
<dbReference type="PANTHER" id="PTHR11434:SF0">
    <property type="entry name" value="NADH-UBIQUINONE OXIDOREDUCTASE CHAIN 4L"/>
    <property type="match status" value="1"/>
</dbReference>
<dbReference type="PANTHER" id="PTHR11434">
    <property type="entry name" value="NADH-UBIQUINONE OXIDOREDUCTASE SUBUNIT ND4L"/>
    <property type="match status" value="1"/>
</dbReference>
<dbReference type="Pfam" id="PF00420">
    <property type="entry name" value="Oxidored_q2"/>
    <property type="match status" value="1"/>
</dbReference>
<proteinExistence type="inferred from homology"/>
<feature type="chain" id="PRO_0000274969" description="NADH-ubiquinone oxidoreductase chain 4L">
    <location>
        <begin position="1"/>
        <end position="98"/>
    </location>
</feature>
<feature type="transmembrane region" description="Helical" evidence="3">
    <location>
        <begin position="1"/>
        <end position="21"/>
    </location>
</feature>
<feature type="transmembrane region" description="Helical" evidence="3">
    <location>
        <begin position="29"/>
        <end position="49"/>
    </location>
</feature>
<feature type="transmembrane region" description="Helical" evidence="3">
    <location>
        <begin position="61"/>
        <end position="81"/>
    </location>
</feature>
<geneLocation type="mitochondrion"/>
<gene>
    <name type="primary">MT-ND4L</name>
    <name type="synonym">MTND4L</name>
    <name type="synonym">NADH4L</name>
    <name type="synonym">ND4L</name>
</gene>
<name>NU4LM_VULLA</name>
<evidence type="ECO:0000250" key="1">
    <source>
        <dbReference type="UniProtKB" id="P03901"/>
    </source>
</evidence>
<evidence type="ECO:0000250" key="2">
    <source>
        <dbReference type="UniProtKB" id="P03902"/>
    </source>
</evidence>
<evidence type="ECO:0000255" key="3"/>
<evidence type="ECO:0000305" key="4"/>